<accession>Q71YR0</accession>
<sequence length="671" mass="74826">MADKKRYEELINILDQYSYDYYVIDNPTVEDAEYDQKMQELLKIEEAHPEWVTPESPSKRVGGEVLEGFKKVAHDTPMLSLANAFNQEDLADFDRRIRDKVGDDIAYMCELKIDGLAVSLQYENGKYKQGATRGDGTIGEDITANLRTIRSIPMKLQKDYSIEVRGEAFMPKRSFQKLNEIREEEGQMLFANPRNAAAGSLRQLDTKIAASRNLDIFLYAVADFGEMGVETHSAGLDMLETLGLKVNKERRLCNSLEEVYAYIEEWTEKRAGLAYDIDGIVLKLNNLEQQRQMGNTVKSPRWSIAYKFPAEEVPTKLLDIELNVGRTGVITPTAVLEPVRVAGTTVSRASLHNEDLITEKDIRIGDTVLIKKAGDIIPEVIKSITEKRSGSEEPFHMPKNCPACDSELVRLEEEVALRCINPKCPAQIKEGLIHFVSRNAMNIDGLGEKVIIQLFSQHLIKDVADLFFLSKEKLLELERMGEKSVTNLLASIQASKQNSLEKLLFGLGIRHVGAKAAKSLAIHFDTMDNLKVADKETLTSINDIGEKMADSIVTYFANEEVHDLLEELKRAGVNMTYTGPKLEDMSEEELVFTGKTVVLTGKLEKLTRNDAKALIESLGGNVSGSVSKKTDVVVAGSDAGSKLAKAEELAIPIWSEEDLIEYLPDEGGLNE</sequence>
<reference key="1">
    <citation type="journal article" date="2004" name="Nucleic Acids Res.">
        <title>Whole genome comparisons of serotype 4b and 1/2a strains of the food-borne pathogen Listeria monocytogenes reveal new insights into the core genome components of this species.</title>
        <authorList>
            <person name="Nelson K.E."/>
            <person name="Fouts D.E."/>
            <person name="Mongodin E.F."/>
            <person name="Ravel J."/>
            <person name="DeBoy R.T."/>
            <person name="Kolonay J.F."/>
            <person name="Rasko D.A."/>
            <person name="Angiuoli S.V."/>
            <person name="Gill S.R."/>
            <person name="Paulsen I.T."/>
            <person name="Peterson J.D."/>
            <person name="White O."/>
            <person name="Nelson W.C."/>
            <person name="Nierman W.C."/>
            <person name="Beanan M.J."/>
            <person name="Brinkac L.M."/>
            <person name="Daugherty S.C."/>
            <person name="Dodson R.J."/>
            <person name="Durkin A.S."/>
            <person name="Madupu R."/>
            <person name="Haft D.H."/>
            <person name="Selengut J."/>
            <person name="Van Aken S.E."/>
            <person name="Khouri H.M."/>
            <person name="Fedorova N."/>
            <person name="Forberger H.A."/>
            <person name="Tran B."/>
            <person name="Kathariou S."/>
            <person name="Wonderling L.D."/>
            <person name="Uhlich G.A."/>
            <person name="Bayles D.O."/>
            <person name="Luchansky J.B."/>
            <person name="Fraser C.M."/>
        </authorList>
    </citation>
    <scope>NUCLEOTIDE SEQUENCE [LARGE SCALE GENOMIC DNA]</scope>
    <source>
        <strain>F2365</strain>
    </source>
</reference>
<dbReference type="EC" id="6.5.1.2" evidence="1"/>
<dbReference type="EMBL" id="AE017262">
    <property type="protein sequence ID" value="AAT04554.1"/>
    <property type="molecule type" value="Genomic_DNA"/>
</dbReference>
<dbReference type="RefSeq" id="WP_010958942.1">
    <property type="nucleotide sequence ID" value="NC_002973.6"/>
</dbReference>
<dbReference type="SMR" id="Q71YR0"/>
<dbReference type="KEGG" id="lmf:LMOf2365_1783"/>
<dbReference type="HOGENOM" id="CLU_007764_2_1_9"/>
<dbReference type="GO" id="GO:0005829">
    <property type="term" value="C:cytosol"/>
    <property type="evidence" value="ECO:0007669"/>
    <property type="project" value="TreeGrafter"/>
</dbReference>
<dbReference type="GO" id="GO:0003677">
    <property type="term" value="F:DNA binding"/>
    <property type="evidence" value="ECO:0007669"/>
    <property type="project" value="InterPro"/>
</dbReference>
<dbReference type="GO" id="GO:0003911">
    <property type="term" value="F:DNA ligase (NAD+) activity"/>
    <property type="evidence" value="ECO:0007669"/>
    <property type="project" value="UniProtKB-UniRule"/>
</dbReference>
<dbReference type="GO" id="GO:0046872">
    <property type="term" value="F:metal ion binding"/>
    <property type="evidence" value="ECO:0007669"/>
    <property type="project" value="UniProtKB-KW"/>
</dbReference>
<dbReference type="GO" id="GO:0006281">
    <property type="term" value="P:DNA repair"/>
    <property type="evidence" value="ECO:0007669"/>
    <property type="project" value="UniProtKB-KW"/>
</dbReference>
<dbReference type="GO" id="GO:0006260">
    <property type="term" value="P:DNA replication"/>
    <property type="evidence" value="ECO:0007669"/>
    <property type="project" value="UniProtKB-KW"/>
</dbReference>
<dbReference type="CDD" id="cd17748">
    <property type="entry name" value="BRCT_DNA_ligase_like"/>
    <property type="match status" value="1"/>
</dbReference>
<dbReference type="CDD" id="cd00114">
    <property type="entry name" value="LIGANc"/>
    <property type="match status" value="1"/>
</dbReference>
<dbReference type="FunFam" id="1.10.150.20:FF:000006">
    <property type="entry name" value="DNA ligase"/>
    <property type="match status" value="1"/>
</dbReference>
<dbReference type="FunFam" id="1.10.150.20:FF:000007">
    <property type="entry name" value="DNA ligase"/>
    <property type="match status" value="1"/>
</dbReference>
<dbReference type="FunFam" id="1.10.287.610:FF:000002">
    <property type="entry name" value="DNA ligase"/>
    <property type="match status" value="1"/>
</dbReference>
<dbReference type="FunFam" id="2.40.50.140:FF:000012">
    <property type="entry name" value="DNA ligase"/>
    <property type="match status" value="1"/>
</dbReference>
<dbReference type="FunFam" id="3.30.470.30:FF:000001">
    <property type="entry name" value="DNA ligase"/>
    <property type="match status" value="1"/>
</dbReference>
<dbReference type="FunFam" id="3.40.50.10190:FF:000026">
    <property type="entry name" value="DNA ligase"/>
    <property type="match status" value="1"/>
</dbReference>
<dbReference type="FunFam" id="6.20.10.30:FF:000002">
    <property type="entry name" value="DNA ligase"/>
    <property type="match status" value="1"/>
</dbReference>
<dbReference type="Gene3D" id="6.20.10.30">
    <property type="match status" value="1"/>
</dbReference>
<dbReference type="Gene3D" id="1.10.150.20">
    <property type="entry name" value="5' to 3' exonuclease, C-terminal subdomain"/>
    <property type="match status" value="2"/>
</dbReference>
<dbReference type="Gene3D" id="3.40.50.10190">
    <property type="entry name" value="BRCT domain"/>
    <property type="match status" value="1"/>
</dbReference>
<dbReference type="Gene3D" id="3.30.470.30">
    <property type="entry name" value="DNA ligase/mRNA capping enzyme"/>
    <property type="match status" value="1"/>
</dbReference>
<dbReference type="Gene3D" id="1.10.287.610">
    <property type="entry name" value="Helix hairpin bin"/>
    <property type="match status" value="1"/>
</dbReference>
<dbReference type="Gene3D" id="2.40.50.140">
    <property type="entry name" value="Nucleic acid-binding proteins"/>
    <property type="match status" value="1"/>
</dbReference>
<dbReference type="HAMAP" id="MF_01588">
    <property type="entry name" value="DNA_ligase_A"/>
    <property type="match status" value="1"/>
</dbReference>
<dbReference type="InterPro" id="IPR001357">
    <property type="entry name" value="BRCT_dom"/>
</dbReference>
<dbReference type="InterPro" id="IPR036420">
    <property type="entry name" value="BRCT_dom_sf"/>
</dbReference>
<dbReference type="InterPro" id="IPR041663">
    <property type="entry name" value="DisA/LigA_HHH"/>
</dbReference>
<dbReference type="InterPro" id="IPR001679">
    <property type="entry name" value="DNA_ligase"/>
</dbReference>
<dbReference type="InterPro" id="IPR033136">
    <property type="entry name" value="DNA_ligase_CS"/>
</dbReference>
<dbReference type="InterPro" id="IPR013839">
    <property type="entry name" value="DNAligase_adenylation"/>
</dbReference>
<dbReference type="InterPro" id="IPR013840">
    <property type="entry name" value="DNAligase_N"/>
</dbReference>
<dbReference type="InterPro" id="IPR003583">
    <property type="entry name" value="Hlx-hairpin-Hlx_DNA-bd_motif"/>
</dbReference>
<dbReference type="InterPro" id="IPR012340">
    <property type="entry name" value="NA-bd_OB-fold"/>
</dbReference>
<dbReference type="InterPro" id="IPR004150">
    <property type="entry name" value="NAD_DNA_ligase_OB"/>
</dbReference>
<dbReference type="InterPro" id="IPR010994">
    <property type="entry name" value="RuvA_2-like"/>
</dbReference>
<dbReference type="InterPro" id="IPR004149">
    <property type="entry name" value="Znf_DNAligase_C4"/>
</dbReference>
<dbReference type="NCBIfam" id="TIGR00575">
    <property type="entry name" value="dnlj"/>
    <property type="match status" value="1"/>
</dbReference>
<dbReference type="NCBIfam" id="NF005932">
    <property type="entry name" value="PRK07956.1"/>
    <property type="match status" value="1"/>
</dbReference>
<dbReference type="PANTHER" id="PTHR23389">
    <property type="entry name" value="CHROMOSOME TRANSMISSION FIDELITY FACTOR 18"/>
    <property type="match status" value="1"/>
</dbReference>
<dbReference type="PANTHER" id="PTHR23389:SF9">
    <property type="entry name" value="DNA LIGASE"/>
    <property type="match status" value="1"/>
</dbReference>
<dbReference type="Pfam" id="PF00533">
    <property type="entry name" value="BRCT"/>
    <property type="match status" value="1"/>
</dbReference>
<dbReference type="Pfam" id="PF01653">
    <property type="entry name" value="DNA_ligase_aden"/>
    <property type="match status" value="1"/>
</dbReference>
<dbReference type="Pfam" id="PF03120">
    <property type="entry name" value="DNA_ligase_OB"/>
    <property type="match status" value="1"/>
</dbReference>
<dbReference type="Pfam" id="PF03119">
    <property type="entry name" value="DNA_ligase_ZBD"/>
    <property type="match status" value="1"/>
</dbReference>
<dbReference type="Pfam" id="PF12826">
    <property type="entry name" value="HHH_2"/>
    <property type="match status" value="1"/>
</dbReference>
<dbReference type="Pfam" id="PF14520">
    <property type="entry name" value="HHH_5"/>
    <property type="match status" value="1"/>
</dbReference>
<dbReference type="PIRSF" id="PIRSF001604">
    <property type="entry name" value="LigA"/>
    <property type="match status" value="1"/>
</dbReference>
<dbReference type="SMART" id="SM00292">
    <property type="entry name" value="BRCT"/>
    <property type="match status" value="1"/>
</dbReference>
<dbReference type="SMART" id="SM00278">
    <property type="entry name" value="HhH1"/>
    <property type="match status" value="3"/>
</dbReference>
<dbReference type="SMART" id="SM00532">
    <property type="entry name" value="LIGANc"/>
    <property type="match status" value="1"/>
</dbReference>
<dbReference type="SUPFAM" id="SSF52113">
    <property type="entry name" value="BRCT domain"/>
    <property type="match status" value="1"/>
</dbReference>
<dbReference type="SUPFAM" id="SSF56091">
    <property type="entry name" value="DNA ligase/mRNA capping enzyme, catalytic domain"/>
    <property type="match status" value="1"/>
</dbReference>
<dbReference type="SUPFAM" id="SSF50249">
    <property type="entry name" value="Nucleic acid-binding proteins"/>
    <property type="match status" value="1"/>
</dbReference>
<dbReference type="SUPFAM" id="SSF47781">
    <property type="entry name" value="RuvA domain 2-like"/>
    <property type="match status" value="1"/>
</dbReference>
<dbReference type="PROSITE" id="PS50172">
    <property type="entry name" value="BRCT"/>
    <property type="match status" value="1"/>
</dbReference>
<dbReference type="PROSITE" id="PS01056">
    <property type="entry name" value="DNA_LIGASE_N2"/>
    <property type="match status" value="1"/>
</dbReference>
<gene>
    <name evidence="1" type="primary">ligA</name>
    <name type="ordered locus">LMOf2365_1783</name>
</gene>
<protein>
    <recommendedName>
        <fullName evidence="1">DNA ligase</fullName>
        <ecNumber evidence="1">6.5.1.2</ecNumber>
    </recommendedName>
    <alternativeName>
        <fullName evidence="1">Polydeoxyribonucleotide synthase [NAD(+)]</fullName>
    </alternativeName>
</protein>
<keyword id="KW-0227">DNA damage</keyword>
<keyword id="KW-0234">DNA repair</keyword>
<keyword id="KW-0235">DNA replication</keyword>
<keyword id="KW-0436">Ligase</keyword>
<keyword id="KW-0460">Magnesium</keyword>
<keyword id="KW-0464">Manganese</keyword>
<keyword id="KW-0479">Metal-binding</keyword>
<keyword id="KW-0520">NAD</keyword>
<keyword id="KW-0862">Zinc</keyword>
<name>DNLJ_LISMF</name>
<comment type="function">
    <text evidence="1">DNA ligase that catalyzes the formation of phosphodiester linkages between 5'-phosphoryl and 3'-hydroxyl groups in double-stranded DNA using NAD as a coenzyme and as the energy source for the reaction. It is essential for DNA replication and repair of damaged DNA.</text>
</comment>
<comment type="catalytic activity">
    <reaction evidence="1">
        <text>NAD(+) + (deoxyribonucleotide)n-3'-hydroxyl + 5'-phospho-(deoxyribonucleotide)m = (deoxyribonucleotide)n+m + AMP + beta-nicotinamide D-nucleotide.</text>
        <dbReference type="EC" id="6.5.1.2"/>
    </reaction>
</comment>
<comment type="cofactor">
    <cofactor evidence="1">
        <name>Mg(2+)</name>
        <dbReference type="ChEBI" id="CHEBI:18420"/>
    </cofactor>
    <cofactor evidence="1">
        <name>Mn(2+)</name>
        <dbReference type="ChEBI" id="CHEBI:29035"/>
    </cofactor>
</comment>
<comment type="similarity">
    <text evidence="1">Belongs to the NAD-dependent DNA ligase family. LigA subfamily.</text>
</comment>
<proteinExistence type="inferred from homology"/>
<evidence type="ECO:0000255" key="1">
    <source>
        <dbReference type="HAMAP-Rule" id="MF_01588"/>
    </source>
</evidence>
<feature type="chain" id="PRO_0000313297" description="DNA ligase">
    <location>
        <begin position="1"/>
        <end position="671"/>
    </location>
</feature>
<feature type="domain" description="BRCT" evidence="1">
    <location>
        <begin position="587"/>
        <end position="671"/>
    </location>
</feature>
<feature type="active site" description="N6-AMP-lysine intermediate" evidence="1">
    <location>
        <position position="112"/>
    </location>
</feature>
<feature type="binding site" evidence="1">
    <location>
        <begin position="31"/>
        <end position="35"/>
    </location>
    <ligand>
        <name>NAD(+)</name>
        <dbReference type="ChEBI" id="CHEBI:57540"/>
    </ligand>
</feature>
<feature type="binding site" evidence="1">
    <location>
        <begin position="80"/>
        <end position="81"/>
    </location>
    <ligand>
        <name>NAD(+)</name>
        <dbReference type="ChEBI" id="CHEBI:57540"/>
    </ligand>
</feature>
<feature type="binding site" evidence="1">
    <location>
        <position position="110"/>
    </location>
    <ligand>
        <name>NAD(+)</name>
        <dbReference type="ChEBI" id="CHEBI:57540"/>
    </ligand>
</feature>
<feature type="binding site" evidence="1">
    <location>
        <position position="133"/>
    </location>
    <ligand>
        <name>NAD(+)</name>
        <dbReference type="ChEBI" id="CHEBI:57540"/>
    </ligand>
</feature>
<feature type="binding site" evidence="1">
    <location>
        <position position="167"/>
    </location>
    <ligand>
        <name>NAD(+)</name>
        <dbReference type="ChEBI" id="CHEBI:57540"/>
    </ligand>
</feature>
<feature type="binding site" evidence="1">
    <location>
        <position position="283"/>
    </location>
    <ligand>
        <name>NAD(+)</name>
        <dbReference type="ChEBI" id="CHEBI:57540"/>
    </ligand>
</feature>
<feature type="binding site" evidence="1">
    <location>
        <position position="307"/>
    </location>
    <ligand>
        <name>NAD(+)</name>
        <dbReference type="ChEBI" id="CHEBI:57540"/>
    </ligand>
</feature>
<feature type="binding site" evidence="1">
    <location>
        <position position="401"/>
    </location>
    <ligand>
        <name>Zn(2+)</name>
        <dbReference type="ChEBI" id="CHEBI:29105"/>
    </ligand>
</feature>
<feature type="binding site" evidence="1">
    <location>
        <position position="404"/>
    </location>
    <ligand>
        <name>Zn(2+)</name>
        <dbReference type="ChEBI" id="CHEBI:29105"/>
    </ligand>
</feature>
<feature type="binding site" evidence="1">
    <location>
        <position position="419"/>
    </location>
    <ligand>
        <name>Zn(2+)</name>
        <dbReference type="ChEBI" id="CHEBI:29105"/>
    </ligand>
</feature>
<feature type="binding site" evidence="1">
    <location>
        <position position="424"/>
    </location>
    <ligand>
        <name>Zn(2+)</name>
        <dbReference type="ChEBI" id="CHEBI:29105"/>
    </ligand>
</feature>
<organism>
    <name type="scientific">Listeria monocytogenes serotype 4b (strain F2365)</name>
    <dbReference type="NCBI Taxonomy" id="265669"/>
    <lineage>
        <taxon>Bacteria</taxon>
        <taxon>Bacillati</taxon>
        <taxon>Bacillota</taxon>
        <taxon>Bacilli</taxon>
        <taxon>Bacillales</taxon>
        <taxon>Listeriaceae</taxon>
        <taxon>Listeria</taxon>
    </lineage>
</organism>